<accession>A7ZKF0</accession>
<feature type="chain" id="PRO_1000064510" description="Glucans biosynthesis protein C">
    <location>
        <begin position="1"/>
        <end position="385"/>
    </location>
</feature>
<feature type="transmembrane region" description="Helical" evidence="1">
    <location>
        <begin position="17"/>
        <end position="37"/>
    </location>
</feature>
<feature type="transmembrane region" description="Helical" evidence="1">
    <location>
        <begin position="60"/>
        <end position="80"/>
    </location>
</feature>
<feature type="transmembrane region" description="Helical" evidence="1">
    <location>
        <begin position="91"/>
        <end position="111"/>
    </location>
</feature>
<feature type="transmembrane region" description="Helical" evidence="1">
    <location>
        <begin position="137"/>
        <end position="157"/>
    </location>
</feature>
<feature type="transmembrane region" description="Helical" evidence="1">
    <location>
        <begin position="173"/>
        <end position="193"/>
    </location>
</feature>
<feature type="transmembrane region" description="Helical" evidence="1">
    <location>
        <begin position="212"/>
        <end position="232"/>
    </location>
</feature>
<feature type="transmembrane region" description="Helical" evidence="1">
    <location>
        <begin position="239"/>
        <end position="259"/>
    </location>
</feature>
<feature type="transmembrane region" description="Helical" evidence="1">
    <location>
        <begin position="274"/>
        <end position="294"/>
    </location>
</feature>
<feature type="transmembrane region" description="Helical" evidence="1">
    <location>
        <begin position="311"/>
        <end position="331"/>
    </location>
</feature>
<feature type="transmembrane region" description="Helical" evidence="1">
    <location>
        <begin position="338"/>
        <end position="358"/>
    </location>
</feature>
<comment type="function">
    <text evidence="1">Necessary for the succinyl substitution of periplasmic glucans. Could catalyze the transfer of succinyl residues from the cytoplasmic side of the membrane to the nascent glucan backbones on the periplasmic side of the membrane.</text>
</comment>
<comment type="pathway">
    <text evidence="1">Glycan metabolism; osmoregulated periplasmic glucan (OPG) biosynthesis.</text>
</comment>
<comment type="subcellular location">
    <subcellularLocation>
        <location evidence="1">Cell membrane</location>
        <topology evidence="1">Multi-pass membrane protein</topology>
    </subcellularLocation>
</comment>
<comment type="similarity">
    <text evidence="1">Belongs to the acyltransferase 3 family. OpgC subfamily.</text>
</comment>
<organism>
    <name type="scientific">Escherichia coli O139:H28 (strain E24377A / ETEC)</name>
    <dbReference type="NCBI Taxonomy" id="331111"/>
    <lineage>
        <taxon>Bacteria</taxon>
        <taxon>Pseudomonadati</taxon>
        <taxon>Pseudomonadota</taxon>
        <taxon>Gammaproteobacteria</taxon>
        <taxon>Enterobacterales</taxon>
        <taxon>Enterobacteriaceae</taxon>
        <taxon>Escherichia</taxon>
    </lineage>
</organism>
<name>OPGC_ECO24</name>
<evidence type="ECO:0000255" key="1">
    <source>
        <dbReference type="HAMAP-Rule" id="MF_01066"/>
    </source>
</evidence>
<proteinExistence type="inferred from homology"/>
<reference key="1">
    <citation type="journal article" date="2008" name="J. Bacteriol.">
        <title>The pangenome structure of Escherichia coli: comparative genomic analysis of E. coli commensal and pathogenic isolates.</title>
        <authorList>
            <person name="Rasko D.A."/>
            <person name="Rosovitz M.J."/>
            <person name="Myers G.S.A."/>
            <person name="Mongodin E.F."/>
            <person name="Fricke W.F."/>
            <person name="Gajer P."/>
            <person name="Crabtree J."/>
            <person name="Sebaihia M."/>
            <person name="Thomson N.R."/>
            <person name="Chaudhuri R."/>
            <person name="Henderson I.R."/>
            <person name="Sperandio V."/>
            <person name="Ravel J."/>
        </authorList>
    </citation>
    <scope>NUCLEOTIDE SEQUENCE [LARGE SCALE GENOMIC DNA]</scope>
    <source>
        <strain>E24377A / ETEC</strain>
    </source>
</reference>
<sequence>MNPVPAQREYFLDSIRAWLMLLGIPFHISLIYSSHTWHVNSAEPSLWLTLFNDFIHSFRMQVFFVISGYFSYMLFLRYPLKKWWKVRVERVGIPMLTAIPLLTLPQFIMLQYVKGKAESWPGLSLYDKYNTLAWELISHLWFLLVLVVMTTLCVWIFKRIRNNLENSDKTNKKFSMVKLSVIFLCLGIGYAVIRRTIFIVYPPILSNGMFNFIVMQTLFYLPFFILGALAFIFPHHKALFTTPSRGCTLAAALAFVAYLLNQRYGSGDAWMYETESVITMVLGLWMVNVVFSFGHRLLNFQSARVTYFVNASLFIYLVHHPLTLFFGAYITPHITSNWLGFLCGLIFVVGIAIILYEIHLRIPLLKFLFSGKPVVKRENDKAPAR</sequence>
<keyword id="KW-0012">Acyltransferase</keyword>
<keyword id="KW-1003">Cell membrane</keyword>
<keyword id="KW-0472">Membrane</keyword>
<keyword id="KW-1185">Reference proteome</keyword>
<keyword id="KW-0808">Transferase</keyword>
<keyword id="KW-0812">Transmembrane</keyword>
<keyword id="KW-1133">Transmembrane helix</keyword>
<protein>
    <recommendedName>
        <fullName evidence="1">Glucans biosynthesis protein C</fullName>
        <ecNumber evidence="1">2.1.-.-</ecNumber>
    </recommendedName>
</protein>
<gene>
    <name evidence="1" type="primary">mdoC</name>
    <name evidence="1" type="synonym">opgC</name>
    <name type="ordered locus">EcE24377A_1167</name>
</gene>
<dbReference type="EC" id="2.1.-.-" evidence="1"/>
<dbReference type="EMBL" id="CP000800">
    <property type="protein sequence ID" value="ABV18059.1"/>
    <property type="molecule type" value="Genomic_DNA"/>
</dbReference>
<dbReference type="RefSeq" id="WP_001070345.1">
    <property type="nucleotide sequence ID" value="NC_009801.1"/>
</dbReference>
<dbReference type="KEGG" id="ecw:EcE24377A_1167"/>
<dbReference type="HOGENOM" id="CLU_036182_2_0_6"/>
<dbReference type="UniPathway" id="UPA00637"/>
<dbReference type="Proteomes" id="UP000001122">
    <property type="component" value="Chromosome"/>
</dbReference>
<dbReference type="GO" id="GO:0005886">
    <property type="term" value="C:plasma membrane"/>
    <property type="evidence" value="ECO:0007669"/>
    <property type="project" value="UniProtKB-SubCell"/>
</dbReference>
<dbReference type="GO" id="GO:0016747">
    <property type="term" value="F:acyltransferase activity, transferring groups other than amino-acyl groups"/>
    <property type="evidence" value="ECO:0007669"/>
    <property type="project" value="InterPro"/>
</dbReference>
<dbReference type="GO" id="GO:0016741">
    <property type="term" value="F:transferase activity, transferring one-carbon groups"/>
    <property type="evidence" value="ECO:0007669"/>
    <property type="project" value="UniProtKB-UniRule"/>
</dbReference>
<dbReference type="GO" id="GO:0009250">
    <property type="term" value="P:glucan biosynthetic process"/>
    <property type="evidence" value="ECO:0007669"/>
    <property type="project" value="UniProtKB-UniRule"/>
</dbReference>
<dbReference type="HAMAP" id="MF_01066">
    <property type="entry name" value="MdoC_OpgC"/>
    <property type="match status" value="1"/>
</dbReference>
<dbReference type="InterPro" id="IPR002656">
    <property type="entry name" value="Acyl_transf_3_dom"/>
</dbReference>
<dbReference type="InterPro" id="IPR050623">
    <property type="entry name" value="Glucan_succinyl_AcylTrfase"/>
</dbReference>
<dbReference type="InterPro" id="IPR023723">
    <property type="entry name" value="Glucans_biosynth_C"/>
</dbReference>
<dbReference type="NCBIfam" id="NF003014">
    <property type="entry name" value="PRK03854.1"/>
    <property type="match status" value="1"/>
</dbReference>
<dbReference type="PANTHER" id="PTHR36927">
    <property type="entry name" value="BLR4337 PROTEIN"/>
    <property type="match status" value="1"/>
</dbReference>
<dbReference type="PANTHER" id="PTHR36927:SF3">
    <property type="entry name" value="GLUCANS BIOSYNTHESIS PROTEIN C"/>
    <property type="match status" value="1"/>
</dbReference>
<dbReference type="Pfam" id="PF01757">
    <property type="entry name" value="Acyl_transf_3"/>
    <property type="match status" value="1"/>
</dbReference>